<accession>A4W8S8</accession>
<feature type="chain" id="PRO_1000058599" description="3-phosphoshikimate 1-carboxyvinyltransferase">
    <location>
        <begin position="1"/>
        <end position="427"/>
    </location>
</feature>
<feature type="active site" description="Proton acceptor" evidence="1">
    <location>
        <position position="313"/>
    </location>
</feature>
<feature type="binding site" evidence="1">
    <location>
        <position position="22"/>
    </location>
    <ligand>
        <name>3-phosphoshikimate</name>
        <dbReference type="ChEBI" id="CHEBI:145989"/>
    </ligand>
</feature>
<feature type="binding site" evidence="1">
    <location>
        <position position="22"/>
    </location>
    <ligand>
        <name>phosphoenolpyruvate</name>
        <dbReference type="ChEBI" id="CHEBI:58702"/>
    </ligand>
</feature>
<feature type="binding site" evidence="1">
    <location>
        <position position="23"/>
    </location>
    <ligand>
        <name>3-phosphoshikimate</name>
        <dbReference type="ChEBI" id="CHEBI:145989"/>
    </ligand>
</feature>
<feature type="binding site" evidence="1">
    <location>
        <position position="27"/>
    </location>
    <ligand>
        <name>3-phosphoshikimate</name>
        <dbReference type="ChEBI" id="CHEBI:145989"/>
    </ligand>
</feature>
<feature type="binding site" evidence="1">
    <location>
        <position position="96"/>
    </location>
    <ligand>
        <name>phosphoenolpyruvate</name>
        <dbReference type="ChEBI" id="CHEBI:58702"/>
    </ligand>
</feature>
<feature type="binding site" evidence="1">
    <location>
        <position position="124"/>
    </location>
    <ligand>
        <name>phosphoenolpyruvate</name>
        <dbReference type="ChEBI" id="CHEBI:58702"/>
    </ligand>
</feature>
<feature type="binding site" evidence="1">
    <location>
        <position position="169"/>
    </location>
    <ligand>
        <name>3-phosphoshikimate</name>
        <dbReference type="ChEBI" id="CHEBI:145989"/>
    </ligand>
</feature>
<feature type="binding site" evidence="1">
    <location>
        <position position="170"/>
    </location>
    <ligand>
        <name>3-phosphoshikimate</name>
        <dbReference type="ChEBI" id="CHEBI:145989"/>
    </ligand>
</feature>
<feature type="binding site" evidence="1">
    <location>
        <position position="171"/>
    </location>
    <ligand>
        <name>3-phosphoshikimate</name>
        <dbReference type="ChEBI" id="CHEBI:145989"/>
    </ligand>
</feature>
<feature type="binding site" evidence="1">
    <location>
        <position position="171"/>
    </location>
    <ligand>
        <name>phosphoenolpyruvate</name>
        <dbReference type="ChEBI" id="CHEBI:58702"/>
    </ligand>
</feature>
<feature type="binding site" evidence="1">
    <location>
        <position position="197"/>
    </location>
    <ligand>
        <name>3-phosphoshikimate</name>
        <dbReference type="ChEBI" id="CHEBI:145989"/>
    </ligand>
</feature>
<feature type="binding site" evidence="1">
    <location>
        <position position="313"/>
    </location>
    <ligand>
        <name>3-phosphoshikimate</name>
        <dbReference type="ChEBI" id="CHEBI:145989"/>
    </ligand>
</feature>
<feature type="binding site" evidence="1">
    <location>
        <position position="336"/>
    </location>
    <ligand>
        <name>3-phosphoshikimate</name>
        <dbReference type="ChEBI" id="CHEBI:145989"/>
    </ligand>
</feature>
<feature type="binding site" evidence="1">
    <location>
        <position position="340"/>
    </location>
    <ligand>
        <name>3-phosphoshikimate</name>
        <dbReference type="ChEBI" id="CHEBI:145989"/>
    </ligand>
</feature>
<feature type="binding site" evidence="1">
    <location>
        <position position="344"/>
    </location>
    <ligand>
        <name>phosphoenolpyruvate</name>
        <dbReference type="ChEBI" id="CHEBI:58702"/>
    </ligand>
</feature>
<feature type="binding site" evidence="1">
    <location>
        <position position="386"/>
    </location>
    <ligand>
        <name>phosphoenolpyruvate</name>
        <dbReference type="ChEBI" id="CHEBI:58702"/>
    </ligand>
</feature>
<feature type="binding site" evidence="1">
    <location>
        <position position="411"/>
    </location>
    <ligand>
        <name>phosphoenolpyruvate</name>
        <dbReference type="ChEBI" id="CHEBI:58702"/>
    </ligand>
</feature>
<comment type="function">
    <text evidence="1">Catalyzes the transfer of the enolpyruvyl moiety of phosphoenolpyruvate (PEP) to the 5-hydroxyl of shikimate-3-phosphate (S3P) to produce enolpyruvyl shikimate-3-phosphate and inorganic phosphate.</text>
</comment>
<comment type="catalytic activity">
    <reaction evidence="1">
        <text>3-phosphoshikimate + phosphoenolpyruvate = 5-O-(1-carboxyvinyl)-3-phosphoshikimate + phosphate</text>
        <dbReference type="Rhea" id="RHEA:21256"/>
        <dbReference type="ChEBI" id="CHEBI:43474"/>
        <dbReference type="ChEBI" id="CHEBI:57701"/>
        <dbReference type="ChEBI" id="CHEBI:58702"/>
        <dbReference type="ChEBI" id="CHEBI:145989"/>
        <dbReference type="EC" id="2.5.1.19"/>
    </reaction>
    <physiologicalReaction direction="left-to-right" evidence="1">
        <dbReference type="Rhea" id="RHEA:21257"/>
    </physiologicalReaction>
</comment>
<comment type="pathway">
    <text evidence="1">Metabolic intermediate biosynthesis; chorismate biosynthesis; chorismate from D-erythrose 4-phosphate and phosphoenolpyruvate: step 6/7.</text>
</comment>
<comment type="subunit">
    <text evidence="1">Monomer.</text>
</comment>
<comment type="subcellular location">
    <subcellularLocation>
        <location evidence="1">Cytoplasm</location>
    </subcellularLocation>
</comment>
<comment type="similarity">
    <text evidence="1">Belongs to the EPSP synthase family.</text>
</comment>
<gene>
    <name evidence="1" type="primary">aroA</name>
    <name type="ordered locus">Ent638_1428</name>
</gene>
<proteinExistence type="inferred from homology"/>
<evidence type="ECO:0000255" key="1">
    <source>
        <dbReference type="HAMAP-Rule" id="MF_00210"/>
    </source>
</evidence>
<keyword id="KW-0028">Amino-acid biosynthesis</keyword>
<keyword id="KW-0057">Aromatic amino acid biosynthesis</keyword>
<keyword id="KW-0963">Cytoplasm</keyword>
<keyword id="KW-0808">Transferase</keyword>
<reference key="1">
    <citation type="journal article" date="2010" name="PLoS Genet.">
        <title>Genome sequence of the plant growth promoting endophytic bacterium Enterobacter sp. 638.</title>
        <authorList>
            <person name="Taghavi S."/>
            <person name="van der Lelie D."/>
            <person name="Hoffman A."/>
            <person name="Zhang Y.B."/>
            <person name="Walla M.D."/>
            <person name="Vangronsveld J."/>
            <person name="Newman L."/>
            <person name="Monchy S."/>
        </authorList>
    </citation>
    <scope>NUCLEOTIDE SEQUENCE [LARGE SCALE GENOMIC DNA]</scope>
    <source>
        <strain>638</strain>
    </source>
</reference>
<name>AROA_ENT38</name>
<organism>
    <name type="scientific">Enterobacter sp. (strain 638)</name>
    <dbReference type="NCBI Taxonomy" id="399742"/>
    <lineage>
        <taxon>Bacteria</taxon>
        <taxon>Pseudomonadati</taxon>
        <taxon>Pseudomonadota</taxon>
        <taxon>Gammaproteobacteria</taxon>
        <taxon>Enterobacterales</taxon>
        <taxon>Enterobacteriaceae</taxon>
        <taxon>Enterobacter</taxon>
    </lineage>
</organism>
<dbReference type="EC" id="2.5.1.19" evidence="1"/>
<dbReference type="EMBL" id="CP000653">
    <property type="protein sequence ID" value="ABP60108.1"/>
    <property type="molecule type" value="Genomic_DNA"/>
</dbReference>
<dbReference type="RefSeq" id="WP_012016825.1">
    <property type="nucleotide sequence ID" value="NC_009436.1"/>
</dbReference>
<dbReference type="SMR" id="A4W8S8"/>
<dbReference type="STRING" id="399742.Ent638_1428"/>
<dbReference type="KEGG" id="ent:Ent638_1428"/>
<dbReference type="eggNOG" id="COG0128">
    <property type="taxonomic scope" value="Bacteria"/>
</dbReference>
<dbReference type="HOGENOM" id="CLU_024321_0_0_6"/>
<dbReference type="OrthoDB" id="9809920at2"/>
<dbReference type="UniPathway" id="UPA00053">
    <property type="reaction ID" value="UER00089"/>
</dbReference>
<dbReference type="Proteomes" id="UP000000230">
    <property type="component" value="Chromosome"/>
</dbReference>
<dbReference type="GO" id="GO:0005737">
    <property type="term" value="C:cytoplasm"/>
    <property type="evidence" value="ECO:0007669"/>
    <property type="project" value="UniProtKB-SubCell"/>
</dbReference>
<dbReference type="GO" id="GO:0003866">
    <property type="term" value="F:3-phosphoshikimate 1-carboxyvinyltransferase activity"/>
    <property type="evidence" value="ECO:0007669"/>
    <property type="project" value="UniProtKB-UniRule"/>
</dbReference>
<dbReference type="GO" id="GO:0008652">
    <property type="term" value="P:amino acid biosynthetic process"/>
    <property type="evidence" value="ECO:0007669"/>
    <property type="project" value="UniProtKB-KW"/>
</dbReference>
<dbReference type="GO" id="GO:0009073">
    <property type="term" value="P:aromatic amino acid family biosynthetic process"/>
    <property type="evidence" value="ECO:0007669"/>
    <property type="project" value="UniProtKB-KW"/>
</dbReference>
<dbReference type="GO" id="GO:0009423">
    <property type="term" value="P:chorismate biosynthetic process"/>
    <property type="evidence" value="ECO:0007669"/>
    <property type="project" value="UniProtKB-UniRule"/>
</dbReference>
<dbReference type="CDD" id="cd01556">
    <property type="entry name" value="EPSP_synthase"/>
    <property type="match status" value="1"/>
</dbReference>
<dbReference type="FunFam" id="3.65.10.10:FF:000003">
    <property type="entry name" value="3-phosphoshikimate 1-carboxyvinyltransferase"/>
    <property type="match status" value="1"/>
</dbReference>
<dbReference type="FunFam" id="3.65.10.10:FF:000004">
    <property type="entry name" value="3-phosphoshikimate 1-carboxyvinyltransferase"/>
    <property type="match status" value="1"/>
</dbReference>
<dbReference type="Gene3D" id="3.65.10.10">
    <property type="entry name" value="Enolpyruvate transferase domain"/>
    <property type="match status" value="2"/>
</dbReference>
<dbReference type="HAMAP" id="MF_00210">
    <property type="entry name" value="EPSP_synth"/>
    <property type="match status" value="1"/>
</dbReference>
<dbReference type="InterPro" id="IPR001986">
    <property type="entry name" value="Enolpyruvate_Tfrase_dom"/>
</dbReference>
<dbReference type="InterPro" id="IPR036968">
    <property type="entry name" value="Enolpyruvate_Tfrase_sf"/>
</dbReference>
<dbReference type="InterPro" id="IPR006264">
    <property type="entry name" value="EPSP_synthase"/>
</dbReference>
<dbReference type="InterPro" id="IPR023193">
    <property type="entry name" value="EPSP_synthase_CS"/>
</dbReference>
<dbReference type="InterPro" id="IPR013792">
    <property type="entry name" value="RNA3'P_cycl/enolpyr_Trfase_a/b"/>
</dbReference>
<dbReference type="NCBIfam" id="TIGR01356">
    <property type="entry name" value="aroA"/>
    <property type="match status" value="1"/>
</dbReference>
<dbReference type="PANTHER" id="PTHR21090">
    <property type="entry name" value="AROM/DEHYDROQUINATE SYNTHASE"/>
    <property type="match status" value="1"/>
</dbReference>
<dbReference type="PANTHER" id="PTHR21090:SF5">
    <property type="entry name" value="PENTAFUNCTIONAL AROM POLYPEPTIDE"/>
    <property type="match status" value="1"/>
</dbReference>
<dbReference type="Pfam" id="PF00275">
    <property type="entry name" value="EPSP_synthase"/>
    <property type="match status" value="1"/>
</dbReference>
<dbReference type="PIRSF" id="PIRSF000505">
    <property type="entry name" value="EPSPS"/>
    <property type="match status" value="1"/>
</dbReference>
<dbReference type="SUPFAM" id="SSF55205">
    <property type="entry name" value="EPT/RTPC-like"/>
    <property type="match status" value="1"/>
</dbReference>
<dbReference type="PROSITE" id="PS00104">
    <property type="entry name" value="EPSP_SYNTHASE_1"/>
    <property type="match status" value="1"/>
</dbReference>
<dbReference type="PROSITE" id="PS00885">
    <property type="entry name" value="EPSP_SYNTHASE_2"/>
    <property type="match status" value="1"/>
</dbReference>
<protein>
    <recommendedName>
        <fullName evidence="1">3-phosphoshikimate 1-carboxyvinyltransferase</fullName>
        <ecNumber evidence="1">2.5.1.19</ecNumber>
    </recommendedName>
    <alternativeName>
        <fullName evidence="1">5-enolpyruvylshikimate-3-phosphate synthase</fullName>
        <shortName evidence="1">EPSP synthase</shortName>
        <shortName evidence="1">EPSPS</shortName>
    </alternativeName>
</protein>
<sequence length="427" mass="45986">MESLTLQPIARVDGTINLPGSKSVSNRALLLAALANGTTVLTNLLDSDDVRHMLNALKALGVQFMLSDDRTRCEVVGNGGALKSATELELFLGNAGTAMRPLAAALCLGSNDIVLTGEPRMKERPIGHLVDALRQGGAQIDYLEQKNYPPVRLRGGFTGGNVEVDGSVSSQFLTALLMTAPLAPQDTVISIKGDLVSKPYIDITLHLMKTFGVEVENQAYQRFVVRGAQQYQSPGNYLVEGDASSASYFLAAGAIKGGTVKVTGIGRNSVQGDIRFADVLEKMGAVVTWGDDFISCTQGELNAVDMDMNHIPDAAMTIATAALFAKGTTTLRNIYNWRVKETDRLFAMATELRKVGAQVEEGEDYIRVTPPAKLQVAEIGTYNDHRMAMCFSLVALSDTPVTILDPKCTAKTFPDYFEQLARISTLA</sequence>